<organism>
    <name type="scientific">Aspergillus niger (strain ATCC MYA-4892 / CBS 513.88 / FGSC A1513)</name>
    <dbReference type="NCBI Taxonomy" id="425011"/>
    <lineage>
        <taxon>Eukaryota</taxon>
        <taxon>Fungi</taxon>
        <taxon>Dikarya</taxon>
        <taxon>Ascomycota</taxon>
        <taxon>Pezizomycotina</taxon>
        <taxon>Eurotiomycetes</taxon>
        <taxon>Eurotiomycetidae</taxon>
        <taxon>Eurotiales</taxon>
        <taxon>Aspergillaceae</taxon>
        <taxon>Aspergillus</taxon>
        <taxon>Aspergillus subgen. Circumdati</taxon>
    </lineage>
</organism>
<proteinExistence type="inferred from homology"/>
<name>AGALA_ASPNC</name>
<dbReference type="EC" id="3.2.1.22"/>
<dbReference type="EMBL" id="AM270108">
    <property type="protein sequence ID" value="CAK44933.1"/>
    <property type="molecule type" value="Genomic_DNA"/>
</dbReference>
<dbReference type="RefSeq" id="XP_001390845.1">
    <property type="nucleotide sequence ID" value="XM_001390808.1"/>
</dbReference>
<dbReference type="SMR" id="A2QL72"/>
<dbReference type="CAZy" id="CBM13">
    <property type="family name" value="Carbohydrate-Binding Module Family 13"/>
</dbReference>
<dbReference type="CAZy" id="GH27">
    <property type="family name" value="Glycoside Hydrolase Family 27"/>
</dbReference>
<dbReference type="GlyCosmos" id="A2QL72">
    <property type="glycosylation" value="8 sites, No reported glycans"/>
</dbReference>
<dbReference type="EnsemblFungi" id="CAK44933">
    <property type="protein sequence ID" value="CAK44933"/>
    <property type="gene ID" value="An06g00170"/>
</dbReference>
<dbReference type="GeneID" id="4981013"/>
<dbReference type="KEGG" id="ang:An06g00170"/>
<dbReference type="VEuPathDB" id="FungiDB:An06g00170"/>
<dbReference type="HOGENOM" id="CLU_013093_3_3_1"/>
<dbReference type="BRENDA" id="3.2.1.49">
    <property type="organism ID" value="518"/>
</dbReference>
<dbReference type="Proteomes" id="UP000006706">
    <property type="component" value="Chromosome 8ER"/>
</dbReference>
<dbReference type="GO" id="GO:0005576">
    <property type="term" value="C:extracellular region"/>
    <property type="evidence" value="ECO:0007669"/>
    <property type="project" value="UniProtKB-SubCell"/>
</dbReference>
<dbReference type="GO" id="GO:0004557">
    <property type="term" value="F:alpha-galactosidase activity"/>
    <property type="evidence" value="ECO:0007669"/>
    <property type="project" value="UniProtKB-EC"/>
</dbReference>
<dbReference type="GO" id="GO:0030246">
    <property type="term" value="F:carbohydrate binding"/>
    <property type="evidence" value="ECO:0007669"/>
    <property type="project" value="UniProtKB-KW"/>
</dbReference>
<dbReference type="GO" id="GO:0015925">
    <property type="term" value="F:galactosidase activity"/>
    <property type="evidence" value="ECO:0000314"/>
    <property type="project" value="AspGD"/>
</dbReference>
<dbReference type="GO" id="GO:0016798">
    <property type="term" value="F:hydrolase activity, acting on glycosyl bonds"/>
    <property type="evidence" value="ECO:0000315"/>
    <property type="project" value="AspGD"/>
</dbReference>
<dbReference type="GO" id="GO:0005975">
    <property type="term" value="P:carbohydrate metabolic process"/>
    <property type="evidence" value="ECO:0007669"/>
    <property type="project" value="InterPro"/>
</dbReference>
<dbReference type="CDD" id="cd23425">
    <property type="entry name" value="beta-trefoil_Ricin_AglA"/>
    <property type="match status" value="1"/>
</dbReference>
<dbReference type="CDD" id="cd14792">
    <property type="entry name" value="GH27"/>
    <property type="match status" value="1"/>
</dbReference>
<dbReference type="FunFam" id="3.20.20.70:FF:000177">
    <property type="entry name" value="Alpha-galactosidase"/>
    <property type="match status" value="1"/>
</dbReference>
<dbReference type="FunFam" id="2.60.40.1180:FF:000056">
    <property type="entry name" value="Alpha-galactosidase A"/>
    <property type="match status" value="1"/>
</dbReference>
<dbReference type="FunFam" id="2.80.10.50:FF:000077">
    <property type="entry name" value="Alpha-galactosidase A"/>
    <property type="match status" value="1"/>
</dbReference>
<dbReference type="Gene3D" id="2.80.10.50">
    <property type="match status" value="1"/>
</dbReference>
<dbReference type="Gene3D" id="3.20.20.70">
    <property type="entry name" value="Aldolase class I"/>
    <property type="match status" value="1"/>
</dbReference>
<dbReference type="Gene3D" id="2.60.40.1180">
    <property type="entry name" value="Golgi alpha-mannosidase II"/>
    <property type="match status" value="1"/>
</dbReference>
<dbReference type="InterPro" id="IPR013785">
    <property type="entry name" value="Aldolase_TIM"/>
</dbReference>
<dbReference type="InterPro" id="IPR002241">
    <property type="entry name" value="Glyco_hydro_27"/>
</dbReference>
<dbReference type="InterPro" id="IPR000111">
    <property type="entry name" value="Glyco_hydro_27/36_CS"/>
</dbReference>
<dbReference type="InterPro" id="IPR013780">
    <property type="entry name" value="Glyco_hydro_b"/>
</dbReference>
<dbReference type="InterPro" id="IPR017853">
    <property type="entry name" value="Glycoside_hydrolase_SF"/>
</dbReference>
<dbReference type="InterPro" id="IPR041233">
    <property type="entry name" value="Melibiase_C"/>
</dbReference>
<dbReference type="InterPro" id="IPR035992">
    <property type="entry name" value="Ricin_B-like_lectins"/>
</dbReference>
<dbReference type="InterPro" id="IPR000772">
    <property type="entry name" value="Ricin_B_lectin"/>
</dbReference>
<dbReference type="PANTHER" id="PTHR11452:SF91">
    <property type="entry name" value="ALPHA-GALACTOSIDASE A-RELATED"/>
    <property type="match status" value="1"/>
</dbReference>
<dbReference type="PANTHER" id="PTHR11452">
    <property type="entry name" value="ALPHA-GALACTOSIDASE/ALPHA-N-ACETYLGALACTOSAMINIDASE"/>
    <property type="match status" value="1"/>
</dbReference>
<dbReference type="Pfam" id="PF16499">
    <property type="entry name" value="Melibiase_2"/>
    <property type="match status" value="1"/>
</dbReference>
<dbReference type="Pfam" id="PF17801">
    <property type="entry name" value="Melibiase_C"/>
    <property type="match status" value="1"/>
</dbReference>
<dbReference type="Pfam" id="PF00652">
    <property type="entry name" value="Ricin_B_lectin"/>
    <property type="match status" value="1"/>
</dbReference>
<dbReference type="PRINTS" id="PR00740">
    <property type="entry name" value="GLHYDRLASE27"/>
</dbReference>
<dbReference type="SMART" id="SM00458">
    <property type="entry name" value="RICIN"/>
    <property type="match status" value="1"/>
</dbReference>
<dbReference type="SUPFAM" id="SSF51445">
    <property type="entry name" value="(Trans)glycosidases"/>
    <property type="match status" value="1"/>
</dbReference>
<dbReference type="SUPFAM" id="SSF51011">
    <property type="entry name" value="Glycosyl hydrolase domain"/>
    <property type="match status" value="1"/>
</dbReference>
<dbReference type="SUPFAM" id="SSF50370">
    <property type="entry name" value="Ricin B-like lectins"/>
    <property type="match status" value="1"/>
</dbReference>
<dbReference type="PROSITE" id="PS00512">
    <property type="entry name" value="ALPHA_GALACTOSIDASE"/>
    <property type="match status" value="1"/>
</dbReference>
<dbReference type="PROSITE" id="PS50231">
    <property type="entry name" value="RICIN_B_LECTIN"/>
    <property type="match status" value="1"/>
</dbReference>
<comment type="function">
    <text evidence="1">Hydrolyzes a variety of simple alpha-D-galactoside as well as more complex molecules such as oligosaccharides and polysaccharides.</text>
</comment>
<comment type="catalytic activity">
    <reaction>
        <text>Hydrolysis of terminal, non-reducing alpha-D-galactose residues in alpha-D-galactosides, including galactose oligosaccharides, galactomannans and galactolipids.</text>
        <dbReference type="EC" id="3.2.1.22"/>
    </reaction>
</comment>
<comment type="subcellular location">
    <subcellularLocation>
        <location evidence="1">Secreted</location>
    </subcellularLocation>
</comment>
<comment type="similarity">
    <text evidence="4">Belongs to the glycosyl hydrolase 27 family.</text>
</comment>
<gene>
    <name type="primary">aglA</name>
    <name type="ORF">An06g00170</name>
</gene>
<evidence type="ECO:0000250" key="1"/>
<evidence type="ECO:0000255" key="2"/>
<evidence type="ECO:0000255" key="3">
    <source>
        <dbReference type="PROSITE-ProRule" id="PRU00174"/>
    </source>
</evidence>
<evidence type="ECO:0000305" key="4"/>
<sequence length="537" mass="59213">MNQGTKSILLAATLAAIPWQVYGSIEQSSLLPIPPMGFNNWARFMCDLNETLFTETADAMAANGLRDAGYNRINLDDCWMAYQRSDNGSLQWNTTKFPHGLPWLAQYVKAKGFHFGIYEDSGNMTCGGYPGSYNHEEQDANTFALWGIDYLKLDGCNVYATQGRTLEEEYKQRYGHWHQVLSKMQHPLIFSESAPAYFAGTDNNTDWYTVMDWVPIYGELARHSTDILVYSGAGSAWDSIMNNYNYNTLLARYQRPGYFNDPDFLIPDHPGLTADEKRSHFALWASFSAPLIISAYIPALSKDEIAFLTNEALIAVNQDPLAQQATFASRDNTLDILTRNLANGDRLLTVLNKGNTTVTRDIPVQWLGLTETDCTYTAEDLWDGKTQKISDHIKIELASHATAVFRLGLPQGCSSVVPTGLVFNTASGNCLTAASNSSVAFQSCNGETSQIWQVTLSGVIRPVSQTTQCLAADGNSVKLQACDSTDSDGQNWTYAVTGNLKNAKTDGCLTEGSVQMKSCLYERDGQVFGLPSGVQLS</sequence>
<protein>
    <recommendedName>
        <fullName>Probable alpha-galactosidase A</fullName>
        <ecNumber>3.2.1.22</ecNumber>
    </recommendedName>
    <alternativeName>
        <fullName>Melibiase A</fullName>
    </alternativeName>
</protein>
<reference key="1">
    <citation type="journal article" date="2007" name="Nat. Biotechnol.">
        <title>Genome sequencing and analysis of the versatile cell factory Aspergillus niger CBS 513.88.</title>
        <authorList>
            <person name="Pel H.J."/>
            <person name="de Winde J.H."/>
            <person name="Archer D.B."/>
            <person name="Dyer P.S."/>
            <person name="Hofmann G."/>
            <person name="Schaap P.J."/>
            <person name="Turner G."/>
            <person name="de Vries R.P."/>
            <person name="Albang R."/>
            <person name="Albermann K."/>
            <person name="Andersen M.R."/>
            <person name="Bendtsen J.D."/>
            <person name="Benen J.A.E."/>
            <person name="van den Berg M."/>
            <person name="Breestraat S."/>
            <person name="Caddick M.X."/>
            <person name="Contreras R."/>
            <person name="Cornell M."/>
            <person name="Coutinho P.M."/>
            <person name="Danchin E.G.J."/>
            <person name="Debets A.J.M."/>
            <person name="Dekker P."/>
            <person name="van Dijck P.W.M."/>
            <person name="van Dijk A."/>
            <person name="Dijkhuizen L."/>
            <person name="Driessen A.J.M."/>
            <person name="d'Enfert C."/>
            <person name="Geysens S."/>
            <person name="Goosen C."/>
            <person name="Groot G.S.P."/>
            <person name="de Groot P.W.J."/>
            <person name="Guillemette T."/>
            <person name="Henrissat B."/>
            <person name="Herweijer M."/>
            <person name="van den Hombergh J.P.T.W."/>
            <person name="van den Hondel C.A.M.J.J."/>
            <person name="van der Heijden R.T.J.M."/>
            <person name="van der Kaaij R.M."/>
            <person name="Klis F.M."/>
            <person name="Kools H.J."/>
            <person name="Kubicek C.P."/>
            <person name="van Kuyk P.A."/>
            <person name="Lauber J."/>
            <person name="Lu X."/>
            <person name="van der Maarel M.J.E.C."/>
            <person name="Meulenberg R."/>
            <person name="Menke H."/>
            <person name="Mortimer M.A."/>
            <person name="Nielsen J."/>
            <person name="Oliver S.G."/>
            <person name="Olsthoorn M."/>
            <person name="Pal K."/>
            <person name="van Peij N.N.M.E."/>
            <person name="Ram A.F.J."/>
            <person name="Rinas U."/>
            <person name="Roubos J.A."/>
            <person name="Sagt C.M.J."/>
            <person name="Schmoll M."/>
            <person name="Sun J."/>
            <person name="Ussery D."/>
            <person name="Varga J."/>
            <person name="Vervecken W."/>
            <person name="van de Vondervoort P.J.J."/>
            <person name="Wedler H."/>
            <person name="Woesten H.A.B."/>
            <person name="Zeng A.-P."/>
            <person name="van Ooyen A.J.J."/>
            <person name="Visser J."/>
            <person name="Stam H."/>
        </authorList>
    </citation>
    <scope>NUCLEOTIDE SEQUENCE [LARGE SCALE GENOMIC DNA]</scope>
    <source>
        <strain>ATCC MYA-4892 / CBS 513.88 / FGSC A1513</strain>
    </source>
</reference>
<keyword id="KW-1015">Disulfide bond</keyword>
<keyword id="KW-0325">Glycoprotein</keyword>
<keyword id="KW-0326">Glycosidase</keyword>
<keyword id="KW-0378">Hydrolase</keyword>
<keyword id="KW-0430">Lectin</keyword>
<keyword id="KW-1185">Reference proteome</keyword>
<keyword id="KW-0964">Secreted</keyword>
<keyword id="KW-0732">Signal</keyword>
<accession>A2QL72</accession>
<feature type="signal peptide" evidence="2">
    <location>
        <begin position="1"/>
        <end position="23"/>
    </location>
</feature>
<feature type="chain" id="PRO_5000220032" description="Probable alpha-galactosidase A">
    <location>
        <begin position="24"/>
        <end position="537"/>
    </location>
</feature>
<feature type="domain" description="Ricin B-type lectin" evidence="3">
    <location>
        <begin position="413"/>
        <end position="537"/>
    </location>
</feature>
<feature type="active site" description="Nucleophile" evidence="1">
    <location>
        <position position="154"/>
    </location>
</feature>
<feature type="active site" description="Proton donor" evidence="1">
    <location>
        <position position="212"/>
    </location>
</feature>
<feature type="glycosylation site" description="N-linked (GlcNAc...) asparagine" evidence="2">
    <location>
        <position position="49"/>
    </location>
</feature>
<feature type="glycosylation site" description="N-linked (GlcNAc...) asparagine" evidence="2">
    <location>
        <position position="87"/>
    </location>
</feature>
<feature type="glycosylation site" description="N-linked (GlcNAc...) asparagine" evidence="2">
    <location>
        <position position="93"/>
    </location>
</feature>
<feature type="glycosylation site" description="N-linked (GlcNAc...) asparagine" evidence="2">
    <location>
        <position position="123"/>
    </location>
</feature>
<feature type="glycosylation site" description="N-linked (GlcNAc...) asparagine" evidence="2">
    <location>
        <position position="203"/>
    </location>
</feature>
<feature type="glycosylation site" description="N-linked (GlcNAc...) asparagine" evidence="2">
    <location>
        <position position="355"/>
    </location>
</feature>
<feature type="glycosylation site" description="N-linked (GlcNAc...) asparagine" evidence="2">
    <location>
        <position position="436"/>
    </location>
</feature>
<feature type="glycosylation site" description="N-linked (GlcNAc...) asparagine" evidence="2">
    <location>
        <position position="491"/>
    </location>
</feature>
<feature type="disulfide bond" evidence="3">
    <location>
        <begin position="46"/>
        <end position="78"/>
    </location>
</feature>
<feature type="disulfide bond" evidence="3">
    <location>
        <begin position="126"/>
        <end position="156"/>
    </location>
</feature>
<feature type="disulfide bond" evidence="3">
    <location>
        <begin position="430"/>
        <end position="444"/>
    </location>
</feature>
<feature type="disulfide bond" evidence="3">
    <location>
        <begin position="469"/>
        <end position="482"/>
    </location>
</feature>